<proteinExistence type="inferred from homology"/>
<keyword id="KW-0030">Aminoacyl-tRNA synthetase</keyword>
<keyword id="KW-0067">ATP-binding</keyword>
<keyword id="KW-0963">Cytoplasm</keyword>
<keyword id="KW-0436">Ligase</keyword>
<keyword id="KW-0479">Metal-binding</keyword>
<keyword id="KW-0547">Nucleotide-binding</keyword>
<keyword id="KW-0648">Protein biosynthesis</keyword>
<keyword id="KW-0694">RNA-binding</keyword>
<keyword id="KW-0820">tRNA-binding</keyword>
<keyword id="KW-0862">Zinc</keyword>
<organism>
    <name type="scientific">Janthinobacterium sp. (strain Marseille)</name>
    <name type="common">Minibacterium massiliensis</name>
    <dbReference type="NCBI Taxonomy" id="375286"/>
    <lineage>
        <taxon>Bacteria</taxon>
        <taxon>Pseudomonadati</taxon>
        <taxon>Pseudomonadota</taxon>
        <taxon>Betaproteobacteria</taxon>
        <taxon>Burkholderiales</taxon>
        <taxon>Oxalobacteraceae</taxon>
        <taxon>Janthinobacterium</taxon>
    </lineage>
</organism>
<name>SYA_JANMA</name>
<feature type="chain" id="PRO_0000347639" description="Alanine--tRNA ligase">
    <location>
        <begin position="1"/>
        <end position="869"/>
    </location>
</feature>
<feature type="binding site" evidence="1">
    <location>
        <position position="559"/>
    </location>
    <ligand>
        <name>Zn(2+)</name>
        <dbReference type="ChEBI" id="CHEBI:29105"/>
    </ligand>
</feature>
<feature type="binding site" evidence="1">
    <location>
        <position position="563"/>
    </location>
    <ligand>
        <name>Zn(2+)</name>
        <dbReference type="ChEBI" id="CHEBI:29105"/>
    </ligand>
</feature>
<feature type="binding site" evidence="1">
    <location>
        <position position="660"/>
    </location>
    <ligand>
        <name>Zn(2+)</name>
        <dbReference type="ChEBI" id="CHEBI:29105"/>
    </ligand>
</feature>
<feature type="binding site" evidence="1">
    <location>
        <position position="664"/>
    </location>
    <ligand>
        <name>Zn(2+)</name>
        <dbReference type="ChEBI" id="CHEBI:29105"/>
    </ligand>
</feature>
<dbReference type="EC" id="6.1.1.7" evidence="1"/>
<dbReference type="EMBL" id="CP000269">
    <property type="protein sequence ID" value="ABR88268.1"/>
    <property type="molecule type" value="Genomic_DNA"/>
</dbReference>
<dbReference type="RefSeq" id="WP_012078447.1">
    <property type="nucleotide sequence ID" value="NC_009659.1"/>
</dbReference>
<dbReference type="SMR" id="A6SVH6"/>
<dbReference type="STRING" id="375286.mma_0583"/>
<dbReference type="KEGG" id="mms:mma_0583"/>
<dbReference type="eggNOG" id="COG0013">
    <property type="taxonomic scope" value="Bacteria"/>
</dbReference>
<dbReference type="HOGENOM" id="CLU_004485_1_1_4"/>
<dbReference type="OrthoDB" id="9803884at2"/>
<dbReference type="Proteomes" id="UP000006388">
    <property type="component" value="Chromosome"/>
</dbReference>
<dbReference type="GO" id="GO:0005829">
    <property type="term" value="C:cytosol"/>
    <property type="evidence" value="ECO:0007669"/>
    <property type="project" value="TreeGrafter"/>
</dbReference>
<dbReference type="GO" id="GO:0004813">
    <property type="term" value="F:alanine-tRNA ligase activity"/>
    <property type="evidence" value="ECO:0007669"/>
    <property type="project" value="UniProtKB-UniRule"/>
</dbReference>
<dbReference type="GO" id="GO:0002161">
    <property type="term" value="F:aminoacyl-tRNA deacylase activity"/>
    <property type="evidence" value="ECO:0007669"/>
    <property type="project" value="TreeGrafter"/>
</dbReference>
<dbReference type="GO" id="GO:0005524">
    <property type="term" value="F:ATP binding"/>
    <property type="evidence" value="ECO:0007669"/>
    <property type="project" value="UniProtKB-UniRule"/>
</dbReference>
<dbReference type="GO" id="GO:0000049">
    <property type="term" value="F:tRNA binding"/>
    <property type="evidence" value="ECO:0007669"/>
    <property type="project" value="UniProtKB-KW"/>
</dbReference>
<dbReference type="GO" id="GO:0008270">
    <property type="term" value="F:zinc ion binding"/>
    <property type="evidence" value="ECO:0007669"/>
    <property type="project" value="UniProtKB-UniRule"/>
</dbReference>
<dbReference type="GO" id="GO:0006419">
    <property type="term" value="P:alanyl-tRNA aminoacylation"/>
    <property type="evidence" value="ECO:0007669"/>
    <property type="project" value="UniProtKB-UniRule"/>
</dbReference>
<dbReference type="GO" id="GO:0045892">
    <property type="term" value="P:negative regulation of DNA-templated transcription"/>
    <property type="evidence" value="ECO:0007669"/>
    <property type="project" value="TreeGrafter"/>
</dbReference>
<dbReference type="CDD" id="cd00673">
    <property type="entry name" value="AlaRS_core"/>
    <property type="match status" value="1"/>
</dbReference>
<dbReference type="FunFam" id="2.40.30.130:FF:000001">
    <property type="entry name" value="Alanine--tRNA ligase"/>
    <property type="match status" value="1"/>
</dbReference>
<dbReference type="FunFam" id="3.10.310.40:FF:000001">
    <property type="entry name" value="Alanine--tRNA ligase"/>
    <property type="match status" value="1"/>
</dbReference>
<dbReference type="FunFam" id="3.30.54.20:FF:000001">
    <property type="entry name" value="Alanine--tRNA ligase"/>
    <property type="match status" value="1"/>
</dbReference>
<dbReference type="FunFam" id="3.30.930.10:FF:000004">
    <property type="entry name" value="Alanine--tRNA ligase"/>
    <property type="match status" value="1"/>
</dbReference>
<dbReference type="FunFam" id="3.30.980.10:FF:000004">
    <property type="entry name" value="Alanine--tRNA ligase, cytoplasmic"/>
    <property type="match status" value="1"/>
</dbReference>
<dbReference type="Gene3D" id="2.40.30.130">
    <property type="match status" value="1"/>
</dbReference>
<dbReference type="Gene3D" id="3.10.310.40">
    <property type="match status" value="1"/>
</dbReference>
<dbReference type="Gene3D" id="3.30.54.20">
    <property type="match status" value="1"/>
</dbReference>
<dbReference type="Gene3D" id="6.10.250.550">
    <property type="match status" value="1"/>
</dbReference>
<dbReference type="Gene3D" id="3.30.930.10">
    <property type="entry name" value="Bira Bifunctional Protein, Domain 2"/>
    <property type="match status" value="1"/>
</dbReference>
<dbReference type="Gene3D" id="3.30.980.10">
    <property type="entry name" value="Threonyl-trna Synthetase, Chain A, domain 2"/>
    <property type="match status" value="1"/>
</dbReference>
<dbReference type="HAMAP" id="MF_00036_B">
    <property type="entry name" value="Ala_tRNA_synth_B"/>
    <property type="match status" value="1"/>
</dbReference>
<dbReference type="InterPro" id="IPR045864">
    <property type="entry name" value="aa-tRNA-synth_II/BPL/LPL"/>
</dbReference>
<dbReference type="InterPro" id="IPR002318">
    <property type="entry name" value="Ala-tRNA-lgiase_IIc"/>
</dbReference>
<dbReference type="InterPro" id="IPR018162">
    <property type="entry name" value="Ala-tRNA-ligase_IIc_anticod-bd"/>
</dbReference>
<dbReference type="InterPro" id="IPR018165">
    <property type="entry name" value="Ala-tRNA-synth_IIc_core"/>
</dbReference>
<dbReference type="InterPro" id="IPR018164">
    <property type="entry name" value="Ala-tRNA-synth_IIc_N"/>
</dbReference>
<dbReference type="InterPro" id="IPR050058">
    <property type="entry name" value="Ala-tRNA_ligase"/>
</dbReference>
<dbReference type="InterPro" id="IPR023033">
    <property type="entry name" value="Ala_tRNA_ligase_euk/bac"/>
</dbReference>
<dbReference type="InterPro" id="IPR003156">
    <property type="entry name" value="DHHA1_dom"/>
</dbReference>
<dbReference type="InterPro" id="IPR018163">
    <property type="entry name" value="Thr/Ala-tRNA-synth_IIc_edit"/>
</dbReference>
<dbReference type="InterPro" id="IPR009000">
    <property type="entry name" value="Transl_B-barrel_sf"/>
</dbReference>
<dbReference type="InterPro" id="IPR012947">
    <property type="entry name" value="tRNA_SAD"/>
</dbReference>
<dbReference type="NCBIfam" id="TIGR00344">
    <property type="entry name" value="alaS"/>
    <property type="match status" value="1"/>
</dbReference>
<dbReference type="PANTHER" id="PTHR11777:SF9">
    <property type="entry name" value="ALANINE--TRNA LIGASE, CYTOPLASMIC"/>
    <property type="match status" value="1"/>
</dbReference>
<dbReference type="PANTHER" id="PTHR11777">
    <property type="entry name" value="ALANYL-TRNA SYNTHETASE"/>
    <property type="match status" value="1"/>
</dbReference>
<dbReference type="Pfam" id="PF02272">
    <property type="entry name" value="DHHA1"/>
    <property type="match status" value="1"/>
</dbReference>
<dbReference type="Pfam" id="PF01411">
    <property type="entry name" value="tRNA-synt_2c"/>
    <property type="match status" value="1"/>
</dbReference>
<dbReference type="Pfam" id="PF07973">
    <property type="entry name" value="tRNA_SAD"/>
    <property type="match status" value="1"/>
</dbReference>
<dbReference type="PRINTS" id="PR00980">
    <property type="entry name" value="TRNASYNTHALA"/>
</dbReference>
<dbReference type="SMART" id="SM00863">
    <property type="entry name" value="tRNA_SAD"/>
    <property type="match status" value="1"/>
</dbReference>
<dbReference type="SUPFAM" id="SSF55681">
    <property type="entry name" value="Class II aaRS and biotin synthetases"/>
    <property type="match status" value="1"/>
</dbReference>
<dbReference type="SUPFAM" id="SSF101353">
    <property type="entry name" value="Putative anticodon-binding domain of alanyl-tRNA synthetase (AlaRS)"/>
    <property type="match status" value="1"/>
</dbReference>
<dbReference type="SUPFAM" id="SSF55186">
    <property type="entry name" value="ThrRS/AlaRS common domain"/>
    <property type="match status" value="1"/>
</dbReference>
<dbReference type="SUPFAM" id="SSF50447">
    <property type="entry name" value="Translation proteins"/>
    <property type="match status" value="1"/>
</dbReference>
<dbReference type="PROSITE" id="PS50860">
    <property type="entry name" value="AA_TRNA_LIGASE_II_ALA"/>
    <property type="match status" value="1"/>
</dbReference>
<gene>
    <name evidence="1" type="primary">alaS</name>
    <name type="ordered locus">mma_0583</name>
</gene>
<evidence type="ECO:0000255" key="1">
    <source>
        <dbReference type="HAMAP-Rule" id="MF_00036"/>
    </source>
</evidence>
<accession>A6SVH6</accession>
<reference key="1">
    <citation type="journal article" date="2007" name="PLoS Genet.">
        <title>Genome analysis of Minibacterium massiliensis highlights the convergent evolution of water-living bacteria.</title>
        <authorList>
            <person name="Audic S."/>
            <person name="Robert C."/>
            <person name="Campagna B."/>
            <person name="Parinello H."/>
            <person name="Claverie J.-M."/>
            <person name="Raoult D."/>
            <person name="Drancourt M."/>
        </authorList>
    </citation>
    <scope>NUCLEOTIDE SEQUENCE [LARGE SCALE GENOMIC DNA]</scope>
    <source>
        <strain>Marseille</strain>
    </source>
</reference>
<sequence>MNSSEIREKFLKFFESKGHTIVASSPLVPGNDPTLMFTNSGMVQFKDVFLGEDKRPYTRATSVQACLRAGGKHNDLENVGYTARHHTFFEMLGNWSFGDYFKRDALKWSWELLTQVYGLPAEKLLATVYIEDDEAFDIWTKEIGLPPERVIRIGDNKGGRYKSDNFWMMADTGPCGPCSEIFYDHGPHIAGGPPGSPDEDGDRFIEIWNNVFMQFDMAEDGSVKPLPAPCVDTGMGLERLAAILQHVHSNYEIDTFEALIKAAGRETNTKDLSNNSLKVIADHIRATAFLVADGVIPSNEGRGYVQRRIIRRAIRHGYKLGQKKPFFHKLVKDLVEQMGEAYPKLKADAQRITDVLKAEEERFFETLANGMEILDAALAGDAKVLPGEVAFKLHDTFGFPLDLSADVCRERGLSVDEAGFAAAMEKQKAAGRAAGKFKMERAVEYTGAGNTFTGYEHLEEQATVVGLYFEGTAVPSLKEGQAGIVVLDTTPFYSESGGQVGDQGFISAEGVQFGVEDTQKIKADVYGHHGVQTQGTLTVGDKVKAAVDGARRAATMRNHSVTHIMHKALREVLGDHVQQKGSLVDPDKTRFDFAHNAPVTREQILEIEKRVNAEILLNSDTQARVMDIESAQKTGALMLFGEKYGETVRVLDIGSSRELCGGTHVSRTGDIGLFKVMSESGVAAGVRRIEAITGAKALGYVQDLEAVIHSAAAMMKTQPAELEPRLAQVLDQMKALEREVGALKGKLASSQGDELLAQAVDVKGIKVLAAVLEGADVATLRNTMDKLKDKLKTAAIVLAAVNDGKVSLIAGVTADSIAKVKAGDLVNFVAQQVGGKGGGKPDMAQAGGTDASGLPTALQGVAAWVGERA</sequence>
<comment type="function">
    <text evidence="1">Catalyzes the attachment of alanine to tRNA(Ala) in a two-step reaction: alanine is first activated by ATP to form Ala-AMP and then transferred to the acceptor end of tRNA(Ala). Also edits incorrectly charged Ser-tRNA(Ala) and Gly-tRNA(Ala) via its editing domain.</text>
</comment>
<comment type="catalytic activity">
    <reaction evidence="1">
        <text>tRNA(Ala) + L-alanine + ATP = L-alanyl-tRNA(Ala) + AMP + diphosphate</text>
        <dbReference type="Rhea" id="RHEA:12540"/>
        <dbReference type="Rhea" id="RHEA-COMP:9657"/>
        <dbReference type="Rhea" id="RHEA-COMP:9923"/>
        <dbReference type="ChEBI" id="CHEBI:30616"/>
        <dbReference type="ChEBI" id="CHEBI:33019"/>
        <dbReference type="ChEBI" id="CHEBI:57972"/>
        <dbReference type="ChEBI" id="CHEBI:78442"/>
        <dbReference type="ChEBI" id="CHEBI:78497"/>
        <dbReference type="ChEBI" id="CHEBI:456215"/>
        <dbReference type="EC" id="6.1.1.7"/>
    </reaction>
</comment>
<comment type="cofactor">
    <cofactor evidence="1">
        <name>Zn(2+)</name>
        <dbReference type="ChEBI" id="CHEBI:29105"/>
    </cofactor>
    <text evidence="1">Binds 1 zinc ion per subunit.</text>
</comment>
<comment type="subcellular location">
    <subcellularLocation>
        <location evidence="1">Cytoplasm</location>
    </subcellularLocation>
</comment>
<comment type="domain">
    <text evidence="1">Consists of three domains; the N-terminal catalytic domain, the editing domain and the C-terminal C-Ala domain. The editing domain removes incorrectly charged amino acids, while the C-Ala domain, along with tRNA(Ala), serves as a bridge to cooperatively bring together the editing and aminoacylation centers thus stimulating deacylation of misacylated tRNAs.</text>
</comment>
<comment type="similarity">
    <text evidence="1">Belongs to the class-II aminoacyl-tRNA synthetase family.</text>
</comment>
<protein>
    <recommendedName>
        <fullName evidence="1">Alanine--tRNA ligase</fullName>
        <ecNumber evidence="1">6.1.1.7</ecNumber>
    </recommendedName>
    <alternativeName>
        <fullName evidence="1">Alanyl-tRNA synthetase</fullName>
        <shortName evidence="1">AlaRS</shortName>
    </alternativeName>
</protein>